<evidence type="ECO:0000255" key="1"/>
<evidence type="ECO:0000256" key="2">
    <source>
        <dbReference type="SAM" id="MobiDB-lite"/>
    </source>
</evidence>
<evidence type="ECO:0000305" key="3"/>
<reference key="1">
    <citation type="journal article" date="2002" name="Eukaryot. Cell">
        <title>Evolutionary analyses of ABC transporters of Dictyostelium discoideum.</title>
        <authorList>
            <person name="Anjard C."/>
            <person name="Loomis W.F."/>
        </authorList>
    </citation>
    <scope>NUCLEOTIDE SEQUENCE [MRNA]</scope>
    <source>
        <strain>AX4</strain>
    </source>
</reference>
<reference key="2">
    <citation type="journal article" date="2005" name="Nature">
        <title>The genome of the social amoeba Dictyostelium discoideum.</title>
        <authorList>
            <person name="Eichinger L."/>
            <person name="Pachebat J.A."/>
            <person name="Gloeckner G."/>
            <person name="Rajandream M.A."/>
            <person name="Sucgang R."/>
            <person name="Berriman M."/>
            <person name="Song J."/>
            <person name="Olsen R."/>
            <person name="Szafranski K."/>
            <person name="Xu Q."/>
            <person name="Tunggal B."/>
            <person name="Kummerfeld S."/>
            <person name="Madera M."/>
            <person name="Konfortov B.A."/>
            <person name="Rivero F."/>
            <person name="Bankier A.T."/>
            <person name="Lehmann R."/>
            <person name="Hamlin N."/>
            <person name="Davies R."/>
            <person name="Gaudet P."/>
            <person name="Fey P."/>
            <person name="Pilcher K."/>
            <person name="Chen G."/>
            <person name="Saunders D."/>
            <person name="Sodergren E.J."/>
            <person name="Davis P."/>
            <person name="Kerhornou A."/>
            <person name="Nie X."/>
            <person name="Hall N."/>
            <person name="Anjard C."/>
            <person name="Hemphill L."/>
            <person name="Bason N."/>
            <person name="Farbrother P."/>
            <person name="Desany B."/>
            <person name="Just E."/>
            <person name="Morio T."/>
            <person name="Rost R."/>
            <person name="Churcher C.M."/>
            <person name="Cooper J."/>
            <person name="Haydock S."/>
            <person name="van Driessche N."/>
            <person name="Cronin A."/>
            <person name="Goodhead I."/>
            <person name="Muzny D.M."/>
            <person name="Mourier T."/>
            <person name="Pain A."/>
            <person name="Lu M."/>
            <person name="Harper D."/>
            <person name="Lindsay R."/>
            <person name="Hauser H."/>
            <person name="James K.D."/>
            <person name="Quiles M."/>
            <person name="Madan Babu M."/>
            <person name="Saito T."/>
            <person name="Buchrieser C."/>
            <person name="Wardroper A."/>
            <person name="Felder M."/>
            <person name="Thangavelu M."/>
            <person name="Johnson D."/>
            <person name="Knights A."/>
            <person name="Loulseged H."/>
            <person name="Mungall K.L."/>
            <person name="Oliver K."/>
            <person name="Price C."/>
            <person name="Quail M.A."/>
            <person name="Urushihara H."/>
            <person name="Hernandez J."/>
            <person name="Rabbinowitsch E."/>
            <person name="Steffen D."/>
            <person name="Sanders M."/>
            <person name="Ma J."/>
            <person name="Kohara Y."/>
            <person name="Sharp S."/>
            <person name="Simmonds M.N."/>
            <person name="Spiegler S."/>
            <person name="Tivey A."/>
            <person name="Sugano S."/>
            <person name="White B."/>
            <person name="Walker D."/>
            <person name="Woodward J.R."/>
            <person name="Winckler T."/>
            <person name="Tanaka Y."/>
            <person name="Shaulsky G."/>
            <person name="Schleicher M."/>
            <person name="Weinstock G.M."/>
            <person name="Rosenthal A."/>
            <person name="Cox E.C."/>
            <person name="Chisholm R.L."/>
            <person name="Gibbs R.A."/>
            <person name="Loomis W.F."/>
            <person name="Platzer M."/>
            <person name="Kay R.R."/>
            <person name="Williams J.G."/>
            <person name="Dear P.H."/>
            <person name="Noegel A.A."/>
            <person name="Barrell B.G."/>
            <person name="Kuspa A."/>
        </authorList>
    </citation>
    <scope>NUCLEOTIDE SEQUENCE [LARGE SCALE GENOMIC DNA]</scope>
    <source>
        <strain>AX4</strain>
    </source>
</reference>
<dbReference type="EMBL" id="AF482964">
    <property type="protein sequence ID" value="AAL96262.1"/>
    <property type="molecule type" value="Genomic_DNA"/>
</dbReference>
<dbReference type="EMBL" id="AAFI02000149">
    <property type="protein sequence ID" value="EAL62452.1"/>
    <property type="molecule type" value="Genomic_DNA"/>
</dbReference>
<dbReference type="RefSeq" id="XP_635979.1">
    <property type="nucleotide sequence ID" value="XM_630887.1"/>
</dbReference>
<dbReference type="FunCoup" id="Q54GU0">
    <property type="interactions" value="3"/>
</dbReference>
<dbReference type="STRING" id="44689.Q54GU0"/>
<dbReference type="PaxDb" id="44689-DDB0191323"/>
<dbReference type="EnsemblProtists" id="EAL62452">
    <property type="protein sequence ID" value="EAL62452"/>
    <property type="gene ID" value="DDB_G0289879"/>
</dbReference>
<dbReference type="GeneID" id="8627394"/>
<dbReference type="KEGG" id="ddi:DDB_G0289879"/>
<dbReference type="dictyBase" id="DDB_G0289879">
    <property type="gene designation" value="arsB"/>
</dbReference>
<dbReference type="VEuPathDB" id="AmoebaDB:DDB_G0289879"/>
<dbReference type="eggNOG" id="KOG2639">
    <property type="taxonomic scope" value="Eukaryota"/>
</dbReference>
<dbReference type="HOGENOM" id="CLU_011920_0_0_1"/>
<dbReference type="InParanoid" id="Q54GU0"/>
<dbReference type="OMA" id="QNMIIAT"/>
<dbReference type="PhylomeDB" id="Q54GU0"/>
<dbReference type="PRO" id="PR:Q54GU0"/>
<dbReference type="Proteomes" id="UP000002195">
    <property type="component" value="Chromosome 5"/>
</dbReference>
<dbReference type="GO" id="GO:0016020">
    <property type="term" value="C:membrane"/>
    <property type="evidence" value="ECO:0000318"/>
    <property type="project" value="GO_Central"/>
</dbReference>
<dbReference type="GO" id="GO:0005886">
    <property type="term" value="C:plasma membrane"/>
    <property type="evidence" value="ECO:0000317"/>
    <property type="project" value="dictyBase"/>
</dbReference>
<dbReference type="GO" id="GO:0015105">
    <property type="term" value="F:arsenite transmembrane transporter activity"/>
    <property type="evidence" value="ECO:0007669"/>
    <property type="project" value="InterPro"/>
</dbReference>
<dbReference type="GO" id="GO:0015446">
    <property type="term" value="F:ATPase-coupled arsenite transmembrane transporter activity"/>
    <property type="evidence" value="ECO:0000317"/>
    <property type="project" value="dictyBase"/>
</dbReference>
<dbReference type="CDD" id="cd01117">
    <property type="entry name" value="YbiR_permease"/>
    <property type="match status" value="1"/>
</dbReference>
<dbReference type="InterPro" id="IPR000802">
    <property type="entry name" value="Arsenical_pump_ArsB"/>
</dbReference>
<dbReference type="InterPro" id="IPR004680">
    <property type="entry name" value="Cit_transptr-like_dom"/>
</dbReference>
<dbReference type="PANTHER" id="PTHR43302">
    <property type="entry name" value="TRANSPORTER ARSB-RELATED"/>
    <property type="match status" value="1"/>
</dbReference>
<dbReference type="PANTHER" id="PTHR43302:SF5">
    <property type="entry name" value="TRANSPORTER ARSB-RELATED"/>
    <property type="match status" value="1"/>
</dbReference>
<dbReference type="Pfam" id="PF03600">
    <property type="entry name" value="CitMHS"/>
    <property type="match status" value="1"/>
</dbReference>
<dbReference type="PRINTS" id="PR00758">
    <property type="entry name" value="ARSENICPUMP"/>
</dbReference>
<accession>Q54GU0</accession>
<accession>Q8T661</accession>
<sequence length="563" mass="62459">MIDINSSSSSSSSNNNNSNNNNNNNNNNNSNVFEINSSIKPYFTCIVFVISLIFICSSKNIVTKHLPIGRAGSSIIGATLMVYFGIIQPKEIGSVINWDTIILLMSMMMLSNYMEQANIWGMASKILLWKCKSTSIFMVRVCLISSIMSSILTNDTVCVTLTPIVISACKSTNLTFFPFLMAIATSANIGSSALPVGNPQNMIIATAGGLNFFNFFKVSIVSSILGVCLNTILLLLYFKKDLKNLNSNFNQLIETVNPKVEEIDNNHHDDDGANNQSKNEKEMENINKEVEEEQHNNDDDDDDGFNENKNNNNNGGHAILLVASSMDSIDLSDCSIINKDKKKKENFIEIYFNSKEKSIETIVNIIKLIFKFRVAIILTLVLIGFFIGMHMGFTVLFGVSILMICERKDITDIINSVDWELLLFFSGLFVLVEGFDRQFEKEAWTILEPFVPIDSTHLNVLKIFIFSILILVLCNILGNVPLVLSLSPRLLEALAPDFTWILLAFVSTVAGNLTLVGSVANLIVAEKSKSYHEIGFLEYLKFGVPSTILVILIGVPIVVLIGK</sequence>
<organism>
    <name type="scientific">Dictyostelium discoideum</name>
    <name type="common">Social amoeba</name>
    <dbReference type="NCBI Taxonomy" id="44689"/>
    <lineage>
        <taxon>Eukaryota</taxon>
        <taxon>Amoebozoa</taxon>
        <taxon>Evosea</taxon>
        <taxon>Eumycetozoa</taxon>
        <taxon>Dictyostelia</taxon>
        <taxon>Dictyosteliales</taxon>
        <taxon>Dictyosteliaceae</taxon>
        <taxon>Dictyostelium</taxon>
    </lineage>
</organism>
<comment type="subcellular location">
    <subcellularLocation>
        <location evidence="3">Cell membrane</location>
        <topology evidence="3">Multi-pass membrane protein</topology>
    </subcellularLocation>
</comment>
<comment type="similarity">
    <text evidence="3">Belongs to the CitM (TC 2.A.11) transporter family.</text>
</comment>
<name>ARSB_DICDI</name>
<protein>
    <recommendedName>
        <fullName>Putative transporter arsB</fullName>
    </recommendedName>
</protein>
<gene>
    <name type="primary">arsB</name>
    <name type="ORF">DDB_G0289879</name>
</gene>
<proteinExistence type="evidence at transcript level"/>
<feature type="chain" id="PRO_0000363983" description="Putative transporter arsB">
    <location>
        <begin position="1"/>
        <end position="563"/>
    </location>
</feature>
<feature type="transmembrane region" description="Helical" evidence="1">
    <location>
        <begin position="35"/>
        <end position="55"/>
    </location>
</feature>
<feature type="transmembrane region" description="Helical" evidence="1">
    <location>
        <begin position="67"/>
        <end position="87"/>
    </location>
</feature>
<feature type="transmembrane region" description="Helical" evidence="1">
    <location>
        <begin position="91"/>
        <end position="111"/>
    </location>
</feature>
<feature type="transmembrane region" description="Helical" evidence="1">
    <location>
        <begin position="176"/>
        <end position="196"/>
    </location>
</feature>
<feature type="transmembrane region" description="Helical" evidence="1">
    <location>
        <begin position="218"/>
        <end position="238"/>
    </location>
</feature>
<feature type="transmembrane region" description="Helical" evidence="1">
    <location>
        <begin position="376"/>
        <end position="396"/>
    </location>
</feature>
<feature type="transmembrane region" description="Helical" evidence="1">
    <location>
        <begin position="413"/>
        <end position="433"/>
    </location>
</feature>
<feature type="transmembrane region" description="Helical" evidence="1">
    <location>
        <begin position="463"/>
        <end position="483"/>
    </location>
</feature>
<feature type="transmembrane region" description="Helical" evidence="1">
    <location>
        <begin position="500"/>
        <end position="520"/>
    </location>
</feature>
<feature type="transmembrane region" description="Helical" evidence="1">
    <location>
        <begin position="542"/>
        <end position="562"/>
    </location>
</feature>
<feature type="region of interest" description="Disordered" evidence="2">
    <location>
        <begin position="1"/>
        <end position="26"/>
    </location>
</feature>
<feature type="region of interest" description="Disordered" evidence="2">
    <location>
        <begin position="262"/>
        <end position="284"/>
    </location>
</feature>
<feature type="coiled-coil region" evidence="1">
    <location>
        <begin position="273"/>
        <end position="303"/>
    </location>
</feature>
<feature type="compositionally biased region" description="Basic and acidic residues" evidence="2">
    <location>
        <begin position="262"/>
        <end position="271"/>
    </location>
</feature>
<feature type="sequence conflict" description="In Ref. 1; AAL96262." evidence="3" ref="1">
    <original>V</original>
    <variation>G</variation>
    <location>
        <position position="47"/>
    </location>
</feature>
<keyword id="KW-1003">Cell membrane</keyword>
<keyword id="KW-0175">Coiled coil</keyword>
<keyword id="KW-0472">Membrane</keyword>
<keyword id="KW-1185">Reference proteome</keyword>
<keyword id="KW-0812">Transmembrane</keyword>
<keyword id="KW-1133">Transmembrane helix</keyword>
<keyword id="KW-0813">Transport</keyword>